<evidence type="ECO:0000255" key="1">
    <source>
        <dbReference type="HAMAP-Rule" id="MF_00644"/>
    </source>
</evidence>
<gene>
    <name evidence="1" type="primary">psbZ</name>
</gene>
<reference key="1">
    <citation type="journal article" date="2004" name="Mol. Biol. Evol.">
        <title>Chloroplast phylogeny indicates that bryophytes are monophyletic.</title>
        <authorList>
            <person name="Nishiyama T."/>
            <person name="Wolf P.G."/>
            <person name="Kugita M."/>
            <person name="Sinclair R.B."/>
            <person name="Sugita M."/>
            <person name="Sugiura C."/>
            <person name="Wakasugi T."/>
            <person name="Yamada K."/>
            <person name="Yoshinaga K."/>
            <person name="Yamaguchi K."/>
            <person name="Ueda K."/>
            <person name="Hasebe M."/>
        </authorList>
    </citation>
    <scope>NUCLEOTIDE SEQUENCE [LARGE SCALE GENOMIC DNA]</scope>
    <source>
        <strain>Kingyoku</strain>
    </source>
</reference>
<geneLocation type="chloroplast"/>
<name>PSBZ_PSINU</name>
<organism>
    <name type="scientific">Psilotum nudum</name>
    <name type="common">Whisk fern</name>
    <name type="synonym">Lycopodium nudum</name>
    <dbReference type="NCBI Taxonomy" id="3240"/>
    <lineage>
        <taxon>Eukaryota</taxon>
        <taxon>Viridiplantae</taxon>
        <taxon>Streptophyta</taxon>
        <taxon>Embryophyta</taxon>
        <taxon>Tracheophyta</taxon>
        <taxon>Polypodiopsida</taxon>
        <taxon>Ophioglossidae</taxon>
        <taxon>Psilotales</taxon>
        <taxon>Psilotaceae</taxon>
        <taxon>Psilotum</taxon>
    </lineage>
</organism>
<proteinExistence type="inferred from homology"/>
<sequence length="62" mass="6525">MTIAFELSVFALITISFLLVIGVPVVLASPDGWSSSKNIVFSGASLWIGLVFLVGILNSLIS</sequence>
<keyword id="KW-0150">Chloroplast</keyword>
<keyword id="KW-0472">Membrane</keyword>
<keyword id="KW-0602">Photosynthesis</keyword>
<keyword id="KW-0604">Photosystem II</keyword>
<keyword id="KW-0934">Plastid</keyword>
<keyword id="KW-0674">Reaction center</keyword>
<keyword id="KW-0793">Thylakoid</keyword>
<keyword id="KW-0812">Transmembrane</keyword>
<keyword id="KW-1133">Transmembrane helix</keyword>
<dbReference type="EMBL" id="AP004638">
    <property type="protein sequence ID" value="BAB84211.1"/>
    <property type="molecule type" value="Genomic_DNA"/>
</dbReference>
<dbReference type="RefSeq" id="NP_569624.1">
    <property type="nucleotide sequence ID" value="NC_003386.1"/>
</dbReference>
<dbReference type="SMR" id="Q8WI21"/>
<dbReference type="GeneID" id="2545152"/>
<dbReference type="GO" id="GO:0009535">
    <property type="term" value="C:chloroplast thylakoid membrane"/>
    <property type="evidence" value="ECO:0007669"/>
    <property type="project" value="UniProtKB-SubCell"/>
</dbReference>
<dbReference type="GO" id="GO:0009539">
    <property type="term" value="C:photosystem II reaction center"/>
    <property type="evidence" value="ECO:0007669"/>
    <property type="project" value="InterPro"/>
</dbReference>
<dbReference type="GO" id="GO:0015979">
    <property type="term" value="P:photosynthesis"/>
    <property type="evidence" value="ECO:0007669"/>
    <property type="project" value="UniProtKB-UniRule"/>
</dbReference>
<dbReference type="GO" id="GO:0042549">
    <property type="term" value="P:photosystem II stabilization"/>
    <property type="evidence" value="ECO:0007669"/>
    <property type="project" value="InterPro"/>
</dbReference>
<dbReference type="Gene3D" id="1.10.287.740">
    <property type="entry name" value="Photosystem II PsbZ, reaction centre"/>
    <property type="match status" value="1"/>
</dbReference>
<dbReference type="HAMAP" id="MF_00644">
    <property type="entry name" value="PSII_PsbZ"/>
    <property type="match status" value="1"/>
</dbReference>
<dbReference type="InterPro" id="IPR002644">
    <property type="entry name" value="PSII_PsbZ"/>
</dbReference>
<dbReference type="InterPro" id="IPR036512">
    <property type="entry name" value="PSII_PsbZ_sf"/>
</dbReference>
<dbReference type="NCBIfam" id="TIGR03043">
    <property type="entry name" value="PS_II_psbZ"/>
    <property type="match status" value="1"/>
</dbReference>
<dbReference type="PANTHER" id="PTHR34971">
    <property type="entry name" value="PHOTOSYSTEM II REACTION CENTER PROTEIN Z"/>
    <property type="match status" value="1"/>
</dbReference>
<dbReference type="PANTHER" id="PTHR34971:SF2">
    <property type="entry name" value="PHOTOSYSTEM II REACTION CENTER PROTEIN Z"/>
    <property type="match status" value="1"/>
</dbReference>
<dbReference type="Pfam" id="PF01737">
    <property type="entry name" value="Ycf9"/>
    <property type="match status" value="1"/>
</dbReference>
<dbReference type="SUPFAM" id="SSF161055">
    <property type="entry name" value="PsbZ-like"/>
    <property type="match status" value="1"/>
</dbReference>
<comment type="function">
    <text evidence="1">May control the interaction of photosystem II (PSII) cores with the light-harvesting antenna, regulates electron flow through the 2 photosystem reaction centers. PSII is a light-driven water plastoquinone oxidoreductase, using light energy to abstract electrons from H(2)O, generating a proton gradient subsequently used for ATP formation.</text>
</comment>
<comment type="subunit">
    <text evidence="1">PSII is composed of 1 copy each of membrane proteins PsbA, PsbB, PsbC, PsbD, PsbE, PsbF, PsbH, PsbI, PsbJ, PsbK, PsbL, PsbM, PsbT, PsbY, PsbZ, Psb30/Ycf12, at least 3 peripheral proteins of the oxygen-evolving complex and a large number of cofactors. It forms dimeric complexes.</text>
</comment>
<comment type="subcellular location">
    <subcellularLocation>
        <location evidence="1">Plastid</location>
        <location evidence="1">Chloroplast thylakoid membrane</location>
        <topology evidence="1">Multi-pass membrane protein</topology>
    </subcellularLocation>
</comment>
<comment type="similarity">
    <text evidence="1">Belongs to the PsbZ family.</text>
</comment>
<protein>
    <recommendedName>
        <fullName evidence="1">Photosystem II reaction center protein Z</fullName>
        <shortName evidence="1">PSII-Z</shortName>
    </recommendedName>
</protein>
<feature type="chain" id="PRO_0000217725" description="Photosystem II reaction center protein Z">
    <location>
        <begin position="1"/>
        <end position="62"/>
    </location>
</feature>
<feature type="transmembrane region" description="Helical" evidence="1">
    <location>
        <begin position="8"/>
        <end position="28"/>
    </location>
</feature>
<feature type="transmembrane region" description="Helical" evidence="1">
    <location>
        <begin position="41"/>
        <end position="61"/>
    </location>
</feature>
<accession>Q8WI21</accession>